<evidence type="ECO:0000255" key="1">
    <source>
        <dbReference type="HAMAP-Rule" id="MF_00711"/>
    </source>
</evidence>
<evidence type="ECO:0000256" key="2">
    <source>
        <dbReference type="SAM" id="MobiDB-lite"/>
    </source>
</evidence>
<keyword id="KW-0560">Oxidoreductase</keyword>
<keyword id="KW-0663">Pyridoxal phosphate</keyword>
<organism>
    <name type="scientific">Vibrio campbellii (strain ATCC BAA-1116)</name>
    <dbReference type="NCBI Taxonomy" id="2902295"/>
    <lineage>
        <taxon>Bacteria</taxon>
        <taxon>Pseudomonadati</taxon>
        <taxon>Pseudomonadota</taxon>
        <taxon>Gammaproteobacteria</taxon>
        <taxon>Vibrionales</taxon>
        <taxon>Vibrionaceae</taxon>
        <taxon>Vibrio</taxon>
    </lineage>
</organism>
<comment type="function">
    <text evidence="1">The glycine cleavage system catalyzes the degradation of glycine. The P protein binds the alpha-amino group of glycine through its pyridoxal phosphate cofactor; CO(2) is released and the remaining methylamine moiety is then transferred to the lipoamide cofactor of the H protein.</text>
</comment>
<comment type="catalytic activity">
    <reaction evidence="1">
        <text>N(6)-[(R)-lipoyl]-L-lysyl-[glycine-cleavage complex H protein] + glycine + H(+) = N(6)-[(R)-S(8)-aminomethyldihydrolipoyl]-L-lysyl-[glycine-cleavage complex H protein] + CO2</text>
        <dbReference type="Rhea" id="RHEA:24304"/>
        <dbReference type="Rhea" id="RHEA-COMP:10494"/>
        <dbReference type="Rhea" id="RHEA-COMP:10495"/>
        <dbReference type="ChEBI" id="CHEBI:15378"/>
        <dbReference type="ChEBI" id="CHEBI:16526"/>
        <dbReference type="ChEBI" id="CHEBI:57305"/>
        <dbReference type="ChEBI" id="CHEBI:83099"/>
        <dbReference type="ChEBI" id="CHEBI:83143"/>
        <dbReference type="EC" id="1.4.4.2"/>
    </reaction>
</comment>
<comment type="cofactor">
    <cofactor evidence="1">
        <name>pyridoxal 5'-phosphate</name>
        <dbReference type="ChEBI" id="CHEBI:597326"/>
    </cofactor>
</comment>
<comment type="subunit">
    <text evidence="1">The glycine cleavage system is composed of four proteins: P, T, L and H.</text>
</comment>
<comment type="similarity">
    <text evidence="1">Belongs to the GcvP family.</text>
</comment>
<protein>
    <recommendedName>
        <fullName evidence="1">Glycine dehydrogenase (decarboxylating)</fullName>
        <ecNumber evidence="1">1.4.4.2</ecNumber>
    </recommendedName>
    <alternativeName>
        <fullName evidence="1">Glycine cleavage system P-protein</fullName>
    </alternativeName>
    <alternativeName>
        <fullName evidence="1">Glycine decarboxylase</fullName>
    </alternativeName>
    <alternativeName>
        <fullName evidence="1">Glycine dehydrogenase (aminomethyl-transferring)</fullName>
    </alternativeName>
</protein>
<dbReference type="EC" id="1.4.4.2" evidence="1"/>
<dbReference type="EMBL" id="CP000790">
    <property type="protein sequence ID" value="ABU73866.1"/>
    <property type="molecule type" value="Genomic_DNA"/>
</dbReference>
<dbReference type="RefSeq" id="WP_012129510.1">
    <property type="nucleotide sequence ID" value="NC_009784.1"/>
</dbReference>
<dbReference type="SMR" id="A7N5C4"/>
<dbReference type="KEGG" id="vha:VIBHAR_05973"/>
<dbReference type="PATRIC" id="fig|338187.25.peg.4323"/>
<dbReference type="Proteomes" id="UP000008152">
    <property type="component" value="Chromosome II"/>
</dbReference>
<dbReference type="GO" id="GO:0005829">
    <property type="term" value="C:cytosol"/>
    <property type="evidence" value="ECO:0007669"/>
    <property type="project" value="TreeGrafter"/>
</dbReference>
<dbReference type="GO" id="GO:0005960">
    <property type="term" value="C:glycine cleavage complex"/>
    <property type="evidence" value="ECO:0007669"/>
    <property type="project" value="TreeGrafter"/>
</dbReference>
<dbReference type="GO" id="GO:0016594">
    <property type="term" value="F:glycine binding"/>
    <property type="evidence" value="ECO:0007669"/>
    <property type="project" value="TreeGrafter"/>
</dbReference>
<dbReference type="GO" id="GO:0004375">
    <property type="term" value="F:glycine dehydrogenase (decarboxylating) activity"/>
    <property type="evidence" value="ECO:0007669"/>
    <property type="project" value="UniProtKB-EC"/>
</dbReference>
<dbReference type="GO" id="GO:0030170">
    <property type="term" value="F:pyridoxal phosphate binding"/>
    <property type="evidence" value="ECO:0007669"/>
    <property type="project" value="TreeGrafter"/>
</dbReference>
<dbReference type="GO" id="GO:0019464">
    <property type="term" value="P:glycine decarboxylation via glycine cleavage system"/>
    <property type="evidence" value="ECO:0007669"/>
    <property type="project" value="UniProtKB-UniRule"/>
</dbReference>
<dbReference type="CDD" id="cd00613">
    <property type="entry name" value="GDC-P"/>
    <property type="match status" value="2"/>
</dbReference>
<dbReference type="FunFam" id="3.40.640.10:FF:000005">
    <property type="entry name" value="Glycine dehydrogenase (decarboxylating), mitochondrial"/>
    <property type="match status" value="1"/>
</dbReference>
<dbReference type="FunFam" id="3.90.1150.10:FF:000007">
    <property type="entry name" value="Glycine dehydrogenase (decarboxylating), mitochondrial"/>
    <property type="match status" value="1"/>
</dbReference>
<dbReference type="FunFam" id="3.40.640.10:FF:000007">
    <property type="entry name" value="glycine dehydrogenase (Decarboxylating), mitochondrial"/>
    <property type="match status" value="1"/>
</dbReference>
<dbReference type="Gene3D" id="3.90.1150.10">
    <property type="entry name" value="Aspartate Aminotransferase, domain 1"/>
    <property type="match status" value="2"/>
</dbReference>
<dbReference type="Gene3D" id="3.40.640.10">
    <property type="entry name" value="Type I PLP-dependent aspartate aminotransferase-like (Major domain)"/>
    <property type="match status" value="2"/>
</dbReference>
<dbReference type="HAMAP" id="MF_00711">
    <property type="entry name" value="GcvP"/>
    <property type="match status" value="1"/>
</dbReference>
<dbReference type="InterPro" id="IPR003437">
    <property type="entry name" value="GcvP"/>
</dbReference>
<dbReference type="InterPro" id="IPR049316">
    <property type="entry name" value="GDC-P_C"/>
</dbReference>
<dbReference type="InterPro" id="IPR049315">
    <property type="entry name" value="GDC-P_N"/>
</dbReference>
<dbReference type="InterPro" id="IPR020581">
    <property type="entry name" value="GDC_P"/>
</dbReference>
<dbReference type="InterPro" id="IPR015424">
    <property type="entry name" value="PyrdxlP-dep_Trfase"/>
</dbReference>
<dbReference type="InterPro" id="IPR015421">
    <property type="entry name" value="PyrdxlP-dep_Trfase_major"/>
</dbReference>
<dbReference type="InterPro" id="IPR015422">
    <property type="entry name" value="PyrdxlP-dep_Trfase_small"/>
</dbReference>
<dbReference type="NCBIfam" id="TIGR00461">
    <property type="entry name" value="gcvP"/>
    <property type="match status" value="1"/>
</dbReference>
<dbReference type="PANTHER" id="PTHR11773:SF13">
    <property type="entry name" value="GLYCINE DEHYDROGENASE (DECARBOXYLATING)"/>
    <property type="match status" value="1"/>
</dbReference>
<dbReference type="PANTHER" id="PTHR11773">
    <property type="entry name" value="GLYCINE DEHYDROGENASE, DECARBOXYLATING"/>
    <property type="match status" value="1"/>
</dbReference>
<dbReference type="Pfam" id="PF21478">
    <property type="entry name" value="GcvP2_C"/>
    <property type="match status" value="1"/>
</dbReference>
<dbReference type="Pfam" id="PF02347">
    <property type="entry name" value="GDC-P"/>
    <property type="match status" value="2"/>
</dbReference>
<dbReference type="SUPFAM" id="SSF53383">
    <property type="entry name" value="PLP-dependent transferases"/>
    <property type="match status" value="2"/>
</dbReference>
<proteinExistence type="inferred from homology"/>
<accession>A7N5C4</accession>
<sequence>MTELLQSLSTQNEFVARHNGPNKSDQQKMLEAINAVSLDSLIDETVPAQIRLEQPMNLAEAKSEADMLAAMRKFADQNQIKRTFIGQGYYNTFTPNVILRNVMENPGWYTAYTPYQPEISQGRLESLLNYQQMVMDLTGMEIANASLLDEATAAAEAMTLCKRAGKSKSNVFFVADDVHPQTIEVVKTRAKFIGFEVLVGALDSLPEQDVFGALVQYPGTTGEVRDLTDLIAKAQANKTLVTVATDLLASALLKPAGEMGADVAIGSAQRFGVPMGYGGPHAAFMATRDKHKRTMPGRVIGVSIDTNGNQALRMAMQTREQHIRREKATSNICTAQALLANMASFYAVFHGAEGLRTIARRTHHMTAILAAGLTKGGFELAHNSFFDTITINTGAQTEDLYAKALAADINLRKLGTQLGVSFDETTTVADVEALFAVFGVKEEVAALSTEIAGNEFAAIPEALRRTTEYLTHPVFNTHHSETQMMRYLKQLENKDFSLTHGMIPLGSCTMKLNAAAEMIPVTWPEFGSIHPFAPADQAAGYAALAKDLKEKLCEITGYDAFSLQPNSGASGEYAGLIAIQRYHESRGEGHRNVCLIPSSAHGTNPATASMVSMKVVVVKCDEEGNIDVTDLAAKIKKHKDNLSSIMITYPSTHGVYEEQVKEVCEMVHAAGGQVYLDGANMNAQVGLTTPGFIGSDVSHLNLHKTFCIPHGGGGPGMGPIGVKSHLAPFLPGHIENGADGENFAVSAADMGSASILPISWAYIAMMGEAGLTDATKVAILNANYVMEQLRPHYPVLYRGSNGRVAHECIIDIRPLKEETGISEEDIAKRLMDYGFHAPTMSFPVAGTLMVEPTESEDLEELDRFCDAMIAIREEMTKVKNGEWPLDNNPLVNAPHTQFDLAKEEWDRPYSRELGCFPSKATKSWKYWPTVNRVDNVYGDRNLICSCPSIDNYED</sequence>
<gene>
    <name evidence="1" type="primary">gcvP</name>
    <name type="ordered locus">VIBHAR_05973</name>
</gene>
<name>GCSP_VIBC1</name>
<feature type="chain" id="PRO_1000045625" description="Glycine dehydrogenase (decarboxylating)">
    <location>
        <begin position="1"/>
        <end position="954"/>
    </location>
</feature>
<feature type="region of interest" description="Disordered" evidence="2">
    <location>
        <begin position="1"/>
        <end position="24"/>
    </location>
</feature>
<feature type="compositionally biased region" description="Polar residues" evidence="2">
    <location>
        <begin position="1"/>
        <end position="13"/>
    </location>
</feature>
<feature type="modified residue" description="N6-(pyridoxal phosphate)lysine" evidence="1">
    <location>
        <position position="704"/>
    </location>
</feature>
<reference key="1">
    <citation type="submission" date="2007-08" db="EMBL/GenBank/DDBJ databases">
        <authorList>
            <consortium name="The Vibrio harveyi Genome Sequencing Project"/>
            <person name="Bassler B."/>
            <person name="Clifton S.W."/>
            <person name="Fulton L."/>
            <person name="Delehaunty K."/>
            <person name="Fronick C."/>
            <person name="Harrison M."/>
            <person name="Markivic C."/>
            <person name="Fulton R."/>
            <person name="Tin-Wollam A.-M."/>
            <person name="Shah N."/>
            <person name="Pepin K."/>
            <person name="Nash W."/>
            <person name="Thiruvilangam P."/>
            <person name="Bhonagiri V."/>
            <person name="Waters C."/>
            <person name="Tu K.C."/>
            <person name="Irgon J."/>
            <person name="Wilson R.K."/>
        </authorList>
    </citation>
    <scope>NUCLEOTIDE SEQUENCE [LARGE SCALE GENOMIC DNA]</scope>
    <source>
        <strain>ATCC BAA-1116 / BB120</strain>
    </source>
</reference>